<evidence type="ECO:0000250" key="1"/>
<evidence type="ECO:0000255" key="2"/>
<evidence type="ECO:0000256" key="3">
    <source>
        <dbReference type="SAM" id="MobiDB-lite"/>
    </source>
</evidence>
<evidence type="ECO:0000305" key="4"/>
<comment type="function">
    <text evidence="1">Functions as a component of the PCAF complex. The PCAF complex is capable of efficiently acetylating histones in a nucleosomal context (By similarity).</text>
</comment>
<comment type="subcellular location">
    <subcellularLocation>
        <location evidence="1">Nucleus</location>
    </subcellularLocation>
</comment>
<comment type="similarity">
    <text evidence="4">Belongs to the NGG1 family.</text>
</comment>
<proteinExistence type="evidence at transcript level"/>
<dbReference type="EMBL" id="BC080923">
    <property type="protein sequence ID" value="AAH80923.1"/>
    <property type="molecule type" value="mRNA"/>
</dbReference>
<dbReference type="RefSeq" id="NP_001008040.1">
    <property type="nucleotide sequence ID" value="NM_001008039.1"/>
</dbReference>
<dbReference type="SMR" id="Q66JG5"/>
<dbReference type="FunCoup" id="Q66JG5">
    <property type="interactions" value="2989"/>
</dbReference>
<dbReference type="STRING" id="8364.ENSXETP00000052761"/>
<dbReference type="PaxDb" id="8364-ENSXETP00000051085"/>
<dbReference type="DNASU" id="493402"/>
<dbReference type="GeneID" id="493402"/>
<dbReference type="KEGG" id="xtr:493402"/>
<dbReference type="AGR" id="Xenbase:XB-GENE-969840"/>
<dbReference type="CTD" id="10474"/>
<dbReference type="Xenbase" id="XB-GENE-969840">
    <property type="gene designation" value="tada3"/>
</dbReference>
<dbReference type="eggNOG" id="KOG4191">
    <property type="taxonomic scope" value="Eukaryota"/>
</dbReference>
<dbReference type="HOGENOM" id="CLU_038515_0_0_1"/>
<dbReference type="InParanoid" id="Q66JG5"/>
<dbReference type="OrthoDB" id="1232at2759"/>
<dbReference type="Reactome" id="R-XTR-5689880">
    <property type="pathway name" value="Ub-specific processing proteases"/>
</dbReference>
<dbReference type="Proteomes" id="UP000008143">
    <property type="component" value="Chromosome 4"/>
</dbReference>
<dbReference type="Bgee" id="ENSXETG00000023674">
    <property type="expression patterns" value="Expressed in 2-cell stage embryo and 12 other cell types or tissues"/>
</dbReference>
<dbReference type="GO" id="GO:0005634">
    <property type="term" value="C:nucleus"/>
    <property type="evidence" value="ECO:0007669"/>
    <property type="project" value="UniProtKB-SubCell"/>
</dbReference>
<dbReference type="InterPro" id="IPR019340">
    <property type="entry name" value="Histone_AcTrfase_su3"/>
</dbReference>
<dbReference type="PANTHER" id="PTHR13556:SF2">
    <property type="entry name" value="TRANSCRIPTIONAL ADAPTER 3"/>
    <property type="match status" value="1"/>
</dbReference>
<dbReference type="PANTHER" id="PTHR13556">
    <property type="entry name" value="TRANSCRIPTIONAL ADAPTER 3-RELATED"/>
    <property type="match status" value="1"/>
</dbReference>
<dbReference type="Pfam" id="PF10198">
    <property type="entry name" value="Ada3"/>
    <property type="match status" value="1"/>
</dbReference>
<accession>Q66JG5</accession>
<feature type="chain" id="PRO_0000357455" description="Transcriptional adapter 3">
    <location>
        <begin position="1"/>
        <end position="432"/>
    </location>
</feature>
<feature type="region of interest" description="Disordered" evidence="3">
    <location>
        <begin position="88"/>
        <end position="127"/>
    </location>
</feature>
<feature type="region of interest" description="Disordered" evidence="3">
    <location>
        <begin position="275"/>
        <end position="313"/>
    </location>
</feature>
<feature type="coiled-coil region" evidence="2">
    <location>
        <begin position="40"/>
        <end position="69"/>
    </location>
</feature>
<feature type="coiled-coil region" evidence="2">
    <location>
        <begin position="367"/>
        <end position="407"/>
    </location>
</feature>
<feature type="compositionally biased region" description="Polar residues" evidence="3">
    <location>
        <begin position="293"/>
        <end position="305"/>
    </location>
</feature>
<organism>
    <name type="scientific">Xenopus tropicalis</name>
    <name type="common">Western clawed frog</name>
    <name type="synonym">Silurana tropicalis</name>
    <dbReference type="NCBI Taxonomy" id="8364"/>
    <lineage>
        <taxon>Eukaryota</taxon>
        <taxon>Metazoa</taxon>
        <taxon>Chordata</taxon>
        <taxon>Craniata</taxon>
        <taxon>Vertebrata</taxon>
        <taxon>Euteleostomi</taxon>
        <taxon>Amphibia</taxon>
        <taxon>Batrachia</taxon>
        <taxon>Anura</taxon>
        <taxon>Pipoidea</taxon>
        <taxon>Pipidae</taxon>
        <taxon>Xenopodinae</taxon>
        <taxon>Xenopus</taxon>
        <taxon>Silurana</taxon>
    </lineage>
</organism>
<sequence>MSELKDCPLQFHDFKSVDHVKLCPRYTAVLSRSEDDGIGIEELDTLQLELETLLSSASRRLRVLEAETQILTDWQDKKGDRRFLKLGKEHELGTPIKHSKPKKQKLDGKGSHASGPGPGRPKSRNMQQKMQEYEFTDDPVDVPRIPKNDAPNRFWASVEPYCADITNDEIKVLEDLLKTPEDEADYYKIPPLGKHYSQRWAQEDLLEEQKDGARTALSGDKKKGILGPLAELDSKDVDSLLKKSESQHDQPEDGCPFGHLTQRLLQALVEENIISPVEDSPIPEISGKESGTDGASTSPRSQNKPFSAPHTKSLEVRIKEELIAQGLLESDDRPAEDSEDEVLAELRKRQAELKALSAHNRAKKQELLRLAKEEMNRQELRQRVRMADNEVMDAFRKIMAARQKKRTPTKKEKDQAWKALKERESILKLLDG</sequence>
<reference key="1">
    <citation type="submission" date="2004-08" db="EMBL/GenBank/DDBJ databases">
        <authorList>
            <consortium name="NIH - Xenopus Gene Collection (XGC) project"/>
        </authorList>
    </citation>
    <scope>NUCLEOTIDE SEQUENCE [LARGE SCALE MRNA]</scope>
    <source>
        <tissue>Embryo</tissue>
    </source>
</reference>
<protein>
    <recommendedName>
        <fullName>Transcriptional adapter 3</fullName>
    </recommendedName>
    <alternativeName>
        <fullName>ADA3 homolog</fullName>
    </alternativeName>
    <alternativeName>
        <fullName>Transcriptional adapter 3-like</fullName>
        <shortName>ADA3-like protein</shortName>
    </alternativeName>
</protein>
<keyword id="KW-0175">Coiled coil</keyword>
<keyword id="KW-0539">Nucleus</keyword>
<keyword id="KW-1185">Reference proteome</keyword>
<keyword id="KW-0804">Transcription</keyword>
<keyword id="KW-0805">Transcription regulation</keyword>
<name>TADA3_XENTR</name>
<gene>
    <name type="primary">tada3</name>
    <name type="synonym">ada3</name>
    <name type="synonym">tada3l</name>
</gene>